<evidence type="ECO:0000255" key="1">
    <source>
        <dbReference type="HAMAP-Rule" id="MF_00161"/>
    </source>
</evidence>
<proteinExistence type="inferred from homology"/>
<reference key="1">
    <citation type="journal article" date="2009" name="PLoS Genet.">
        <title>Organised genome dynamics in the Escherichia coli species results in highly diverse adaptive paths.</title>
        <authorList>
            <person name="Touchon M."/>
            <person name="Hoede C."/>
            <person name="Tenaillon O."/>
            <person name="Barbe V."/>
            <person name="Baeriswyl S."/>
            <person name="Bidet P."/>
            <person name="Bingen E."/>
            <person name="Bonacorsi S."/>
            <person name="Bouchier C."/>
            <person name="Bouvet O."/>
            <person name="Calteau A."/>
            <person name="Chiapello H."/>
            <person name="Clermont O."/>
            <person name="Cruveiller S."/>
            <person name="Danchin A."/>
            <person name="Diard M."/>
            <person name="Dossat C."/>
            <person name="Karoui M.E."/>
            <person name="Frapy E."/>
            <person name="Garry L."/>
            <person name="Ghigo J.M."/>
            <person name="Gilles A.M."/>
            <person name="Johnson J."/>
            <person name="Le Bouguenec C."/>
            <person name="Lescat M."/>
            <person name="Mangenot S."/>
            <person name="Martinez-Jehanne V."/>
            <person name="Matic I."/>
            <person name="Nassif X."/>
            <person name="Oztas S."/>
            <person name="Petit M.A."/>
            <person name="Pichon C."/>
            <person name="Rouy Z."/>
            <person name="Ruf C.S."/>
            <person name="Schneider D."/>
            <person name="Tourret J."/>
            <person name="Vacherie B."/>
            <person name="Vallenet D."/>
            <person name="Medigue C."/>
            <person name="Rocha E.P.C."/>
            <person name="Denamur E."/>
        </authorList>
    </citation>
    <scope>NUCLEOTIDE SEQUENCE [LARGE SCALE GENOMIC DNA]</scope>
    <source>
        <strain>IAI1</strain>
    </source>
</reference>
<comment type="function">
    <text evidence="1">This protein specifically catalyzes the removal of signal peptides from prolipoproteins.</text>
</comment>
<comment type="catalytic activity">
    <reaction evidence="1">
        <text>Release of signal peptides from bacterial membrane prolipoproteins. Hydrolyzes -Xaa-Yaa-Zaa-|-(S,diacylglyceryl)Cys-, in which Xaa is hydrophobic (preferably Leu), and Yaa (Ala or Ser) and Zaa (Gly or Ala) have small, neutral side chains.</text>
        <dbReference type="EC" id="3.4.23.36"/>
    </reaction>
</comment>
<comment type="pathway">
    <text evidence="1">Protein modification; lipoprotein biosynthesis (signal peptide cleavage).</text>
</comment>
<comment type="subcellular location">
    <subcellularLocation>
        <location evidence="1">Cell inner membrane</location>
        <topology evidence="1">Multi-pass membrane protein</topology>
    </subcellularLocation>
</comment>
<comment type="similarity">
    <text evidence="1">Belongs to the peptidase A8 family.</text>
</comment>
<keyword id="KW-0064">Aspartyl protease</keyword>
<keyword id="KW-0997">Cell inner membrane</keyword>
<keyword id="KW-1003">Cell membrane</keyword>
<keyword id="KW-0378">Hydrolase</keyword>
<keyword id="KW-0472">Membrane</keyword>
<keyword id="KW-0645">Protease</keyword>
<keyword id="KW-0812">Transmembrane</keyword>
<keyword id="KW-1133">Transmembrane helix</keyword>
<sequence length="164" mass="18128">MSQSICSTGLRWLWLVVVVLIIDLGSKYLILQNFALGDTVPLFPSLNLHYARNYGAAFSFLADSGGWQRWFFAGIAIGISVILAVMMYRSKATQKLNNIAYALIIGGALGNLFDRLWHGFVVDMIDFYVGDWHFATFNLADTAICVGAALIVLEGFLPSKAKKQ</sequence>
<name>LSPA_ECO8A</name>
<feature type="chain" id="PRO_1000190802" description="Lipoprotein signal peptidase">
    <location>
        <begin position="1"/>
        <end position="164"/>
    </location>
</feature>
<feature type="transmembrane region" description="Helical" evidence="1">
    <location>
        <begin position="12"/>
        <end position="32"/>
    </location>
</feature>
<feature type="transmembrane region" description="Helical" evidence="1">
    <location>
        <begin position="70"/>
        <end position="90"/>
    </location>
</feature>
<feature type="transmembrane region" description="Helical" evidence="1">
    <location>
        <begin position="102"/>
        <end position="122"/>
    </location>
</feature>
<feature type="transmembrane region" description="Helical" evidence="1">
    <location>
        <begin position="137"/>
        <end position="157"/>
    </location>
</feature>
<feature type="active site" evidence="1">
    <location>
        <position position="123"/>
    </location>
</feature>
<feature type="active site" evidence="1">
    <location>
        <position position="141"/>
    </location>
</feature>
<organism>
    <name type="scientific">Escherichia coli O8 (strain IAI1)</name>
    <dbReference type="NCBI Taxonomy" id="585034"/>
    <lineage>
        <taxon>Bacteria</taxon>
        <taxon>Pseudomonadati</taxon>
        <taxon>Pseudomonadota</taxon>
        <taxon>Gammaproteobacteria</taxon>
        <taxon>Enterobacterales</taxon>
        <taxon>Enterobacteriaceae</taxon>
        <taxon>Escherichia</taxon>
    </lineage>
</organism>
<dbReference type="EC" id="3.4.23.36" evidence="1"/>
<dbReference type="EMBL" id="CU928160">
    <property type="protein sequence ID" value="CAQ96918.1"/>
    <property type="molecule type" value="Genomic_DNA"/>
</dbReference>
<dbReference type="RefSeq" id="WP_000083369.1">
    <property type="nucleotide sequence ID" value="NC_011741.1"/>
</dbReference>
<dbReference type="SMR" id="B7M0C3"/>
<dbReference type="MEROPS" id="A08.001"/>
<dbReference type="GeneID" id="75169926"/>
<dbReference type="KEGG" id="ecr:ECIAI1_0028"/>
<dbReference type="HOGENOM" id="CLU_083252_4_0_6"/>
<dbReference type="UniPathway" id="UPA00665"/>
<dbReference type="GO" id="GO:0005886">
    <property type="term" value="C:plasma membrane"/>
    <property type="evidence" value="ECO:0007669"/>
    <property type="project" value="UniProtKB-SubCell"/>
</dbReference>
<dbReference type="GO" id="GO:0004190">
    <property type="term" value="F:aspartic-type endopeptidase activity"/>
    <property type="evidence" value="ECO:0007669"/>
    <property type="project" value="UniProtKB-UniRule"/>
</dbReference>
<dbReference type="GO" id="GO:0006508">
    <property type="term" value="P:proteolysis"/>
    <property type="evidence" value="ECO:0007669"/>
    <property type="project" value="UniProtKB-KW"/>
</dbReference>
<dbReference type="HAMAP" id="MF_00161">
    <property type="entry name" value="LspA"/>
    <property type="match status" value="1"/>
</dbReference>
<dbReference type="InterPro" id="IPR001872">
    <property type="entry name" value="Peptidase_A8"/>
</dbReference>
<dbReference type="NCBIfam" id="TIGR00077">
    <property type="entry name" value="lspA"/>
    <property type="match status" value="1"/>
</dbReference>
<dbReference type="PANTHER" id="PTHR33695">
    <property type="entry name" value="LIPOPROTEIN SIGNAL PEPTIDASE"/>
    <property type="match status" value="1"/>
</dbReference>
<dbReference type="PANTHER" id="PTHR33695:SF1">
    <property type="entry name" value="LIPOPROTEIN SIGNAL PEPTIDASE"/>
    <property type="match status" value="1"/>
</dbReference>
<dbReference type="Pfam" id="PF01252">
    <property type="entry name" value="Peptidase_A8"/>
    <property type="match status" value="1"/>
</dbReference>
<dbReference type="PRINTS" id="PR00781">
    <property type="entry name" value="LIPOSIGPTASE"/>
</dbReference>
<dbReference type="PROSITE" id="PS00855">
    <property type="entry name" value="SPASE_II"/>
    <property type="match status" value="1"/>
</dbReference>
<protein>
    <recommendedName>
        <fullName evidence="1">Lipoprotein signal peptidase</fullName>
        <ecNumber evidence="1">3.4.23.36</ecNumber>
    </recommendedName>
    <alternativeName>
        <fullName evidence="1">Prolipoprotein signal peptidase</fullName>
    </alternativeName>
    <alternativeName>
        <fullName evidence="1">Signal peptidase II</fullName>
        <shortName evidence="1">SPase II</shortName>
    </alternativeName>
</protein>
<accession>B7M0C3</accession>
<gene>
    <name evidence="1" type="primary">lspA</name>
    <name type="ordered locus">ECIAI1_0028</name>
</gene>